<reference key="1">
    <citation type="journal article" date="2008" name="J. Bacteriol.">
        <title>Insights into the environmental resistance gene pool from the genome sequence of the multidrug-resistant environmental isolate Escherichia coli SMS-3-5.</title>
        <authorList>
            <person name="Fricke W.F."/>
            <person name="Wright M.S."/>
            <person name="Lindell A.H."/>
            <person name="Harkins D.M."/>
            <person name="Baker-Austin C."/>
            <person name="Ravel J."/>
            <person name="Stepanauskas R."/>
        </authorList>
    </citation>
    <scope>NUCLEOTIDE SEQUENCE [LARGE SCALE GENOMIC DNA]</scope>
    <source>
        <strain>SMS-3-5 / SECEC</strain>
    </source>
</reference>
<name>PHNN_ECOSM</name>
<feature type="chain" id="PRO_0000412784" description="Ribose 1,5-bisphosphate phosphokinase PhnN">
    <location>
        <begin position="1"/>
        <end position="185"/>
    </location>
</feature>
<dbReference type="EC" id="2.7.4.23" evidence="1"/>
<dbReference type="EMBL" id="CP000970">
    <property type="protein sequence ID" value="ACB16364.1"/>
    <property type="molecule type" value="Genomic_DNA"/>
</dbReference>
<dbReference type="RefSeq" id="WP_000145993.1">
    <property type="nucleotide sequence ID" value="NC_010498.1"/>
</dbReference>
<dbReference type="SMR" id="B1LPR3"/>
<dbReference type="KEGG" id="ecm:EcSMS35_4560"/>
<dbReference type="HOGENOM" id="CLU_102477_0_0_6"/>
<dbReference type="UniPathway" id="UPA00087">
    <property type="reaction ID" value="UER00175"/>
</dbReference>
<dbReference type="Proteomes" id="UP000007011">
    <property type="component" value="Chromosome"/>
</dbReference>
<dbReference type="GO" id="GO:0005524">
    <property type="term" value="F:ATP binding"/>
    <property type="evidence" value="ECO:0007669"/>
    <property type="project" value="UniProtKB-KW"/>
</dbReference>
<dbReference type="GO" id="GO:0033863">
    <property type="term" value="F:ribose 1,5-bisphosphate phosphokinase activity"/>
    <property type="evidence" value="ECO:0007669"/>
    <property type="project" value="UniProtKB-UniRule"/>
</dbReference>
<dbReference type="GO" id="GO:0006015">
    <property type="term" value="P:5-phosphoribose 1-diphosphate biosynthetic process"/>
    <property type="evidence" value="ECO:0007669"/>
    <property type="project" value="UniProtKB-UniRule"/>
</dbReference>
<dbReference type="GO" id="GO:0019634">
    <property type="term" value="P:organic phosphonate metabolic process"/>
    <property type="evidence" value="ECO:0007669"/>
    <property type="project" value="UniProtKB-UniRule"/>
</dbReference>
<dbReference type="FunFam" id="3.40.50.300:FF:000979">
    <property type="entry name" value="Ribose 1,5-bisphosphate phosphokinase PhnN"/>
    <property type="match status" value="1"/>
</dbReference>
<dbReference type="Gene3D" id="3.40.50.300">
    <property type="entry name" value="P-loop containing nucleotide triphosphate hydrolases"/>
    <property type="match status" value="1"/>
</dbReference>
<dbReference type="HAMAP" id="MF_00836">
    <property type="entry name" value="PhnN"/>
    <property type="match status" value="1"/>
</dbReference>
<dbReference type="InterPro" id="IPR008145">
    <property type="entry name" value="GK/Ca_channel_bsu"/>
</dbReference>
<dbReference type="InterPro" id="IPR027417">
    <property type="entry name" value="P-loop_NTPase"/>
</dbReference>
<dbReference type="InterPro" id="IPR012699">
    <property type="entry name" value="PhnN"/>
</dbReference>
<dbReference type="NCBIfam" id="TIGR02322">
    <property type="entry name" value="phosphon_PhnN"/>
    <property type="match status" value="1"/>
</dbReference>
<dbReference type="NCBIfam" id="NF007485">
    <property type="entry name" value="PRK10078.1"/>
    <property type="match status" value="1"/>
</dbReference>
<dbReference type="Pfam" id="PF13238">
    <property type="entry name" value="AAA_18"/>
    <property type="match status" value="1"/>
</dbReference>
<dbReference type="SMART" id="SM00072">
    <property type="entry name" value="GuKc"/>
    <property type="match status" value="1"/>
</dbReference>
<dbReference type="SUPFAM" id="SSF52540">
    <property type="entry name" value="P-loop containing nucleoside triphosphate hydrolases"/>
    <property type="match status" value="1"/>
</dbReference>
<keyword id="KW-0067">ATP-binding</keyword>
<keyword id="KW-0547">Nucleotide-binding</keyword>
<keyword id="KW-0808">Transferase</keyword>
<organism>
    <name type="scientific">Escherichia coli (strain SMS-3-5 / SECEC)</name>
    <dbReference type="NCBI Taxonomy" id="439855"/>
    <lineage>
        <taxon>Bacteria</taxon>
        <taxon>Pseudomonadati</taxon>
        <taxon>Pseudomonadota</taxon>
        <taxon>Gammaproteobacteria</taxon>
        <taxon>Enterobacterales</taxon>
        <taxon>Enterobacteriaceae</taxon>
        <taxon>Escherichia</taxon>
    </lineage>
</organism>
<comment type="function">
    <text evidence="1">Catalyzes the phosphorylation of ribose 1,5-bisphosphate to 5-phospho-D-ribosyl alpha-1-diphosphate (PRPP).</text>
</comment>
<comment type="catalytic activity">
    <reaction evidence="1">
        <text>alpha-D-ribose 1,5-bisphosphate + ATP = 5-phospho-alpha-D-ribose 1-diphosphate + ADP</text>
        <dbReference type="Rhea" id="RHEA:20109"/>
        <dbReference type="ChEBI" id="CHEBI:30616"/>
        <dbReference type="ChEBI" id="CHEBI:58017"/>
        <dbReference type="ChEBI" id="CHEBI:68688"/>
        <dbReference type="ChEBI" id="CHEBI:456216"/>
        <dbReference type="EC" id="2.7.4.23"/>
    </reaction>
</comment>
<comment type="pathway">
    <text evidence="1">Metabolic intermediate biosynthesis; 5-phospho-alpha-D-ribose 1-diphosphate biosynthesis; 5-phospho-alpha-D-ribose 1-diphosphate from D-ribose 5-phosphate (route II): step 3/3.</text>
</comment>
<comment type="similarity">
    <text evidence="1">Belongs to the ribose 1,5-bisphosphokinase family.</text>
</comment>
<sequence>MTGKLIWLMGASGSGKDSLLTELRQREQTQLLVAHRYITRAASAGSENHIALSEQEFFTRAGQNLLALSWHANGLYYGVGVEIDLWLHAGFDVVVNGSRAHLPQARARYQSALLPVCLQVSPEILRQRLENRGRENASEINARLARAARYTPQDCLTLNNDGSLRQSVDKLLTLIHQKEKHHACL</sequence>
<evidence type="ECO:0000255" key="1">
    <source>
        <dbReference type="HAMAP-Rule" id="MF_00836"/>
    </source>
</evidence>
<accession>B1LPR3</accession>
<protein>
    <recommendedName>
        <fullName evidence="1">Ribose 1,5-bisphosphate phosphokinase PhnN</fullName>
        <ecNumber evidence="1">2.7.4.23</ecNumber>
    </recommendedName>
    <alternativeName>
        <fullName evidence="1">Ribose 1,5-bisphosphokinase</fullName>
    </alternativeName>
</protein>
<gene>
    <name evidence="1" type="primary">phnN</name>
    <name type="ordered locus">EcSMS35_4560</name>
</gene>
<proteinExistence type="inferred from homology"/>